<evidence type="ECO:0000250" key="1">
    <source>
        <dbReference type="UniProtKB" id="P02748"/>
    </source>
</evidence>
<evidence type="ECO:0000255" key="2"/>
<evidence type="ECO:0000255" key="3">
    <source>
        <dbReference type="PROSITE-ProRule" id="PRU00124"/>
    </source>
</evidence>
<evidence type="ECO:0000255" key="4">
    <source>
        <dbReference type="PROSITE-ProRule" id="PRU00210"/>
    </source>
</evidence>
<evidence type="ECO:0000255" key="5">
    <source>
        <dbReference type="PROSITE-ProRule" id="PRU00745"/>
    </source>
</evidence>
<evidence type="ECO:0000305" key="6"/>
<accession>P48770</accession>
<organism>
    <name type="scientific">Equus caballus</name>
    <name type="common">Horse</name>
    <dbReference type="NCBI Taxonomy" id="9796"/>
    <lineage>
        <taxon>Eukaryota</taxon>
        <taxon>Metazoa</taxon>
        <taxon>Chordata</taxon>
        <taxon>Craniata</taxon>
        <taxon>Vertebrata</taxon>
        <taxon>Euteleostomi</taxon>
        <taxon>Mammalia</taxon>
        <taxon>Eutheria</taxon>
        <taxon>Laurasiatheria</taxon>
        <taxon>Perissodactyla</taxon>
        <taxon>Equidae</taxon>
        <taxon>Equus</taxon>
    </lineage>
</organism>
<dbReference type="EMBL" id="U19381">
    <property type="protein sequence ID" value="AAB16820.1"/>
    <property type="molecule type" value="mRNA"/>
</dbReference>
<dbReference type="RefSeq" id="NP_001075419.1">
    <property type="nucleotide sequence ID" value="NM_001081950.1"/>
</dbReference>
<dbReference type="SMR" id="P48770"/>
<dbReference type="FunCoup" id="P48770">
    <property type="interactions" value="241"/>
</dbReference>
<dbReference type="STRING" id="9796.ENSECAP00000006188"/>
<dbReference type="TCDB" id="1.C.39.3.5">
    <property type="family name" value="the membrane attack complex/perforin (macpf) family"/>
</dbReference>
<dbReference type="GlyCosmos" id="P48770">
    <property type="glycosylation" value="3 sites, No reported glycans"/>
</dbReference>
<dbReference type="PaxDb" id="9796-ENSECAP00000006188"/>
<dbReference type="GeneID" id="100034183"/>
<dbReference type="KEGG" id="ecb:100034183"/>
<dbReference type="CTD" id="735"/>
<dbReference type="InParanoid" id="P48770"/>
<dbReference type="OrthoDB" id="10037824at2759"/>
<dbReference type="Proteomes" id="UP000002281">
    <property type="component" value="Unplaced"/>
</dbReference>
<dbReference type="GO" id="GO:0005615">
    <property type="term" value="C:extracellular space"/>
    <property type="evidence" value="ECO:0000250"/>
    <property type="project" value="UniProtKB"/>
</dbReference>
<dbReference type="GO" id="GO:0005579">
    <property type="term" value="C:membrane attack complex"/>
    <property type="evidence" value="ECO:0000250"/>
    <property type="project" value="UniProtKB"/>
</dbReference>
<dbReference type="GO" id="GO:0044218">
    <property type="term" value="C:other organism cell membrane"/>
    <property type="evidence" value="ECO:0007669"/>
    <property type="project" value="UniProtKB-KW"/>
</dbReference>
<dbReference type="GO" id="GO:0005886">
    <property type="term" value="C:plasma membrane"/>
    <property type="evidence" value="ECO:0000250"/>
    <property type="project" value="UniProtKB"/>
</dbReference>
<dbReference type="GO" id="GO:0001906">
    <property type="term" value="P:cell killing"/>
    <property type="evidence" value="ECO:0000250"/>
    <property type="project" value="UniProtKB"/>
</dbReference>
<dbReference type="GO" id="GO:0006956">
    <property type="term" value="P:complement activation"/>
    <property type="evidence" value="ECO:0000318"/>
    <property type="project" value="GO_Central"/>
</dbReference>
<dbReference type="GO" id="GO:0006957">
    <property type="term" value="P:complement activation, alternative pathway"/>
    <property type="evidence" value="ECO:0007669"/>
    <property type="project" value="UniProtKB-KW"/>
</dbReference>
<dbReference type="GO" id="GO:0006958">
    <property type="term" value="P:complement activation, classical pathway"/>
    <property type="evidence" value="ECO:0007669"/>
    <property type="project" value="UniProtKB-KW"/>
</dbReference>
<dbReference type="GO" id="GO:0031640">
    <property type="term" value="P:killing of cells of another organism"/>
    <property type="evidence" value="ECO:0007669"/>
    <property type="project" value="UniProtKB-KW"/>
</dbReference>
<dbReference type="GO" id="GO:0051260">
    <property type="term" value="P:protein homooligomerization"/>
    <property type="evidence" value="ECO:0000250"/>
    <property type="project" value="UniProtKB"/>
</dbReference>
<dbReference type="CDD" id="cd00054">
    <property type="entry name" value="EGF_CA"/>
    <property type="match status" value="1"/>
</dbReference>
<dbReference type="CDD" id="cd00112">
    <property type="entry name" value="LDLa"/>
    <property type="match status" value="1"/>
</dbReference>
<dbReference type="FunFam" id="2.10.25.10:FF:000766">
    <property type="entry name" value="Complement component C9"/>
    <property type="match status" value="1"/>
</dbReference>
<dbReference type="FunFam" id="2.20.100.10:FF:000089">
    <property type="entry name" value="Complement component C9"/>
    <property type="match status" value="1"/>
</dbReference>
<dbReference type="Gene3D" id="2.10.25.10">
    <property type="entry name" value="Laminin"/>
    <property type="match status" value="1"/>
</dbReference>
<dbReference type="Gene3D" id="4.10.400.10">
    <property type="entry name" value="Low-density Lipoprotein Receptor"/>
    <property type="match status" value="1"/>
</dbReference>
<dbReference type="Gene3D" id="2.20.100.10">
    <property type="entry name" value="Thrombospondin type-1 (TSP1) repeat"/>
    <property type="match status" value="1"/>
</dbReference>
<dbReference type="InterPro" id="IPR009030">
    <property type="entry name" value="Growth_fac_rcpt_cys_sf"/>
</dbReference>
<dbReference type="InterPro" id="IPR036055">
    <property type="entry name" value="LDL_receptor-like_sf"/>
</dbReference>
<dbReference type="InterPro" id="IPR023415">
    <property type="entry name" value="LDLR_class-A_CS"/>
</dbReference>
<dbReference type="InterPro" id="IPR002172">
    <property type="entry name" value="LDrepeatLR_classA_rpt"/>
</dbReference>
<dbReference type="InterPro" id="IPR001862">
    <property type="entry name" value="MAC_perforin"/>
</dbReference>
<dbReference type="InterPro" id="IPR020864">
    <property type="entry name" value="MACPF"/>
</dbReference>
<dbReference type="InterPro" id="IPR020863">
    <property type="entry name" value="MACPF_CS"/>
</dbReference>
<dbReference type="InterPro" id="IPR000884">
    <property type="entry name" value="TSP1_rpt"/>
</dbReference>
<dbReference type="InterPro" id="IPR036383">
    <property type="entry name" value="TSP1_rpt_sf"/>
</dbReference>
<dbReference type="PANTHER" id="PTHR45742">
    <property type="entry name" value="COMPLEMENT COMPONENT C6"/>
    <property type="match status" value="1"/>
</dbReference>
<dbReference type="PANTHER" id="PTHR45742:SF3">
    <property type="entry name" value="COMPLEMENT COMPONENT C9"/>
    <property type="match status" value="1"/>
</dbReference>
<dbReference type="Pfam" id="PF00057">
    <property type="entry name" value="Ldl_recept_a"/>
    <property type="match status" value="1"/>
</dbReference>
<dbReference type="Pfam" id="PF01823">
    <property type="entry name" value="MACPF"/>
    <property type="match status" value="1"/>
</dbReference>
<dbReference type="PRINTS" id="PR00764">
    <property type="entry name" value="COMPLEMENTC9"/>
</dbReference>
<dbReference type="SMART" id="SM00192">
    <property type="entry name" value="LDLa"/>
    <property type="match status" value="1"/>
</dbReference>
<dbReference type="SMART" id="SM00457">
    <property type="entry name" value="MACPF"/>
    <property type="match status" value="1"/>
</dbReference>
<dbReference type="SMART" id="SM00209">
    <property type="entry name" value="TSP1"/>
    <property type="match status" value="1"/>
</dbReference>
<dbReference type="SUPFAM" id="SSF57184">
    <property type="entry name" value="Growth factor receptor domain"/>
    <property type="match status" value="1"/>
</dbReference>
<dbReference type="SUPFAM" id="SSF57424">
    <property type="entry name" value="LDL receptor-like module"/>
    <property type="match status" value="1"/>
</dbReference>
<dbReference type="PROSITE" id="PS00022">
    <property type="entry name" value="EGF_1"/>
    <property type="match status" value="1"/>
</dbReference>
<dbReference type="PROSITE" id="PS01209">
    <property type="entry name" value="LDLRA_1"/>
    <property type="match status" value="1"/>
</dbReference>
<dbReference type="PROSITE" id="PS50068">
    <property type="entry name" value="LDLRA_2"/>
    <property type="match status" value="1"/>
</dbReference>
<dbReference type="PROSITE" id="PS00279">
    <property type="entry name" value="MACPF_1"/>
    <property type="match status" value="1"/>
</dbReference>
<dbReference type="PROSITE" id="PS51412">
    <property type="entry name" value="MACPF_2"/>
    <property type="match status" value="1"/>
</dbReference>
<dbReference type="PROSITE" id="PS50092">
    <property type="entry name" value="TSP1"/>
    <property type="match status" value="1"/>
</dbReference>
<gene>
    <name type="primary">C9</name>
</gene>
<reference key="1">
    <citation type="journal article" date="1995" name="J. Immunol.">
        <title>Chimeric horse/human recombinant C9 proteins identify the amino acid sequence in horse C9 responsible for restriction of hemolysis.</title>
        <authorList>
            <person name="Tomlinson S."/>
            <person name="Wang Y."/>
            <person name="Ueda E."/>
            <person name="Esser A.F."/>
        </authorList>
    </citation>
    <scope>NUCLEOTIDE SEQUENCE [MRNA]</scope>
</reference>
<keyword id="KW-0179">Complement alternate pathway</keyword>
<keyword id="KW-0180">Complement pathway</keyword>
<keyword id="KW-0204">Cytolysis</keyword>
<keyword id="KW-1015">Disulfide bond</keyword>
<keyword id="KW-0245">EGF-like domain</keyword>
<keyword id="KW-0325">Glycoprotein</keyword>
<keyword id="KW-0391">Immunity</keyword>
<keyword id="KW-0399">Innate immunity</keyword>
<keyword id="KW-0472">Membrane</keyword>
<keyword id="KW-0473">Membrane attack complex</keyword>
<keyword id="KW-1185">Reference proteome</keyword>
<keyword id="KW-0964">Secreted</keyword>
<keyword id="KW-0732">Signal</keyword>
<keyword id="KW-1052">Target cell membrane</keyword>
<keyword id="KW-1053">Target membrane</keyword>
<keyword id="KW-0812">Transmembrane</keyword>
<keyword id="KW-1134">Transmembrane beta strand</keyword>
<protein>
    <recommendedName>
        <fullName>Complement component C9</fullName>
    </recommendedName>
</protein>
<proteinExistence type="evidence at transcript level"/>
<feature type="signal peptide" evidence="2">
    <location>
        <begin position="1"/>
        <end position="21"/>
    </location>
</feature>
<feature type="chain" id="PRO_0000023601" description="Complement component C9">
    <location>
        <begin position="22"/>
        <end position="547"/>
    </location>
</feature>
<feature type="transmembrane region" description="Beta stranded" evidence="1">
    <location>
        <begin position="235"/>
        <end position="242"/>
    </location>
</feature>
<feature type="transmembrane region" description="Beta stranded" evidence="1">
    <location>
        <begin position="265"/>
        <end position="272"/>
    </location>
</feature>
<feature type="transmembrane region" description="Beta stranded" evidence="1">
    <location>
        <begin position="374"/>
        <end position="381"/>
    </location>
</feature>
<feature type="transmembrane region" description="Beta stranded" evidence="1">
    <location>
        <begin position="382"/>
        <end position="390"/>
    </location>
</feature>
<feature type="domain" description="TSP type-1" evidence="4">
    <location>
        <begin position="42"/>
        <end position="95"/>
    </location>
</feature>
<feature type="domain" description="LDL-receptor class A" evidence="3">
    <location>
        <begin position="99"/>
        <end position="136"/>
    </location>
</feature>
<feature type="domain" description="MACPF" evidence="5">
    <location>
        <begin position="138"/>
        <end position="509"/>
    </location>
</feature>
<feature type="domain" description="EGF-like">
    <location>
        <begin position="510"/>
        <end position="540"/>
    </location>
</feature>
<feature type="glycosylation site" description="N-linked (GlcNAc...) asparagine" evidence="2">
    <location>
        <position position="260"/>
    </location>
</feature>
<feature type="glycosylation site" description="N-linked (GlcNAc...) asparagine" evidence="2">
    <location>
        <position position="277"/>
    </location>
</feature>
<feature type="glycosylation site" description="N-linked (GlcNAc...) asparagine" evidence="2">
    <location>
        <position position="451"/>
    </location>
</feature>
<feature type="disulfide bond" evidence="1">
    <location>
        <begin position="43"/>
        <end position="78"/>
    </location>
</feature>
<feature type="disulfide bond" evidence="1">
    <location>
        <begin position="54"/>
        <end position="88"/>
    </location>
</feature>
<feature type="disulfide bond" evidence="1">
    <location>
        <begin position="57"/>
        <end position="94"/>
    </location>
</feature>
<feature type="disulfide bond" evidence="1">
    <location>
        <begin position="101"/>
        <end position="112"/>
    </location>
</feature>
<feature type="disulfide bond" evidence="1">
    <location>
        <begin position="107"/>
        <end position="125"/>
    </location>
</feature>
<feature type="disulfide bond" evidence="1">
    <location>
        <begin position="119"/>
        <end position="134"/>
    </location>
</feature>
<feature type="disulfide bond" evidence="1">
    <location>
        <begin position="142"/>
        <end position="181"/>
    </location>
</feature>
<feature type="disulfide bond" evidence="1">
    <location>
        <begin position="380"/>
        <end position="404"/>
    </location>
</feature>
<feature type="disulfide bond" evidence="1">
    <location>
        <begin position="510"/>
        <end position="526"/>
    </location>
</feature>
<feature type="disulfide bond" evidence="1">
    <location>
        <begin position="513"/>
        <end position="528"/>
    </location>
</feature>
<feature type="disulfide bond" evidence="1">
    <location>
        <begin position="530"/>
        <end position="539"/>
    </location>
</feature>
<sequence length="547" mass="62014">MSAGRTFAFAICILEVSVLTAGPTPNYAPEPEQQSGTPLPIDCRMSSWSEWSECDPCLRQMFRSRSIEVFGQFNGQRCVDAVGDRRQCVPTEACEEVEDDCGNDFQCGTGRCIKKRLLCNGDNDCGDFSDEDDCENDPRPPCRERVVEESELARTAGYGINILGMDPLSTPFDNEYYNGLCDRVRDGNTLTYYRKPWNLASLAYETKADKNFRIEHYEQQIQAFRSVIEERRSHFNADFTLKFTPTEAKKCKQEPEESCNGTDSSENRIFRFAYSKNETYQLFLSYSSKKEKMFLHVKGVIQLGKFVMRSRDVVLTTTFLDDIKALPTAYEKGEYIAFLETYGTHYSSSGSLGGLYELIYVLDKASMDQKGVELRDIQRCLGFNLDLSLKDKYEVTAKIDKNDCLKRNEKEIVNIMDGSLIDDVISLIRGGTRKYAFELKEKLLKGAKTVNVTDFVNWASSLNDAPVLISQRLSPIYNLIPVKMKDAHQKKQNLERAIEDYINEFSVRKCHPCQNGGTVIQIDGQCLCSCPIAFEGIACETGKKKIS</sequence>
<comment type="function">
    <text evidence="1">Pore-forming component of the membrane attack complex (MAC), a multiprotein complex activated by the complement cascade, which inserts into a target cell membrane and forms a pore, leading to target cell membrane rupture and cell lysis. The MAC is initiated by proteolytic cleavage of C5 into complement C5b in response to the classical, alternative, lectin and GZMK complement pathways. The complement pathways consist in a cascade of proteins that leads to phagocytosis and breakdown of pathogens and signaling that strengthens the adaptive immune system. Constitutes the pore-forming subunit of the MAC complex: during MAC assembly, C9 associates with the C5b8 intermediate complex, and polymerizes to complete the pore.</text>
</comment>
<comment type="activity regulation">
    <text evidence="1">Membrane attack complex (MAC) assembly is inhibited by CD59, thereby protecting self-cells from damage during complement activation. CD59 acts by preventing incorporation of the multiple copies of C9 required for complete formation of the osmolytic pore. MAC assembly is also inhibited by clusterin (CLU) chaperones that inhibit polymerization of C9.</text>
</comment>
<comment type="subunit">
    <text evidence="1">Homooligomer; about 20 C9 chains oligomerize to give rise to a huge beta-barrel that forms a 100 Angstrom diameter pore in target membranes. Component of the membrane attack complex (MAC), composed of complement C5b, C6, C7, C8A, C8B, C8G and multiple copies of the pore-forming subunit C9.</text>
</comment>
<comment type="subcellular location">
    <subcellularLocation>
        <location evidence="1">Secreted</location>
    </subcellularLocation>
    <subcellularLocation>
        <location evidence="1">Target cell membrane</location>
        <topology evidence="1">Multi-pass membrane protein</topology>
    </subcellularLocation>
    <text evidence="1">Secreted as soluble monomer. Oligomerizes at target membranes, forming a pre-pore. A conformation change then leads to the formation of a 100 Angstrom diameter pore.</text>
</comment>
<comment type="PTM">
    <text evidence="1">Phosphorylation sites are present in the extracellular medium.</text>
</comment>
<comment type="similarity">
    <text evidence="6">Belongs to the complement C6/C7/C8/C9 family.</text>
</comment>
<name>CO9_HORSE</name>